<dbReference type="EC" id="1.3.3.3" evidence="1"/>
<dbReference type="EMBL" id="CP000552">
    <property type="protein sequence ID" value="ABM72976.1"/>
    <property type="molecule type" value="Genomic_DNA"/>
</dbReference>
<dbReference type="RefSeq" id="WP_011821062.1">
    <property type="nucleotide sequence ID" value="NC_008817.1"/>
</dbReference>
<dbReference type="SMR" id="A2BYW5"/>
<dbReference type="STRING" id="167542.P9515_17691"/>
<dbReference type="GeneID" id="60201082"/>
<dbReference type="KEGG" id="pmc:P9515_17691"/>
<dbReference type="eggNOG" id="COG0408">
    <property type="taxonomic scope" value="Bacteria"/>
</dbReference>
<dbReference type="HOGENOM" id="CLU_026169_0_1_3"/>
<dbReference type="OrthoDB" id="9777553at2"/>
<dbReference type="UniPathway" id="UPA00251">
    <property type="reaction ID" value="UER00322"/>
</dbReference>
<dbReference type="Proteomes" id="UP000001589">
    <property type="component" value="Chromosome"/>
</dbReference>
<dbReference type="GO" id="GO:0005737">
    <property type="term" value="C:cytoplasm"/>
    <property type="evidence" value="ECO:0007669"/>
    <property type="project" value="UniProtKB-SubCell"/>
</dbReference>
<dbReference type="GO" id="GO:0004109">
    <property type="term" value="F:coproporphyrinogen oxidase activity"/>
    <property type="evidence" value="ECO:0007669"/>
    <property type="project" value="UniProtKB-UniRule"/>
</dbReference>
<dbReference type="GO" id="GO:0046872">
    <property type="term" value="F:metal ion binding"/>
    <property type="evidence" value="ECO:0007669"/>
    <property type="project" value="UniProtKB-KW"/>
</dbReference>
<dbReference type="GO" id="GO:0042803">
    <property type="term" value="F:protein homodimerization activity"/>
    <property type="evidence" value="ECO:0000250"/>
    <property type="project" value="UniProtKB"/>
</dbReference>
<dbReference type="GO" id="GO:0015995">
    <property type="term" value="P:chlorophyll biosynthetic process"/>
    <property type="evidence" value="ECO:0007669"/>
    <property type="project" value="UniProtKB-UniRule"/>
</dbReference>
<dbReference type="GO" id="GO:0006782">
    <property type="term" value="P:protoporphyrinogen IX biosynthetic process"/>
    <property type="evidence" value="ECO:0007669"/>
    <property type="project" value="UniProtKB-UniRule"/>
</dbReference>
<dbReference type="FunFam" id="3.40.1500.10:FF:000007">
    <property type="entry name" value="Oxygen-dependent coproporphyrinogen-III oxidase"/>
    <property type="match status" value="1"/>
</dbReference>
<dbReference type="Gene3D" id="3.40.1500.10">
    <property type="entry name" value="Coproporphyrinogen III oxidase, aerobic"/>
    <property type="match status" value="1"/>
</dbReference>
<dbReference type="HAMAP" id="MF_00333">
    <property type="entry name" value="Coprogen_oxidas"/>
    <property type="match status" value="1"/>
</dbReference>
<dbReference type="InterPro" id="IPR001260">
    <property type="entry name" value="Coprogen_oxidase_aer"/>
</dbReference>
<dbReference type="InterPro" id="IPR036406">
    <property type="entry name" value="Coprogen_oxidase_aer_sf"/>
</dbReference>
<dbReference type="InterPro" id="IPR018375">
    <property type="entry name" value="Coprogen_oxidase_CS"/>
</dbReference>
<dbReference type="NCBIfam" id="NF003727">
    <property type="entry name" value="PRK05330.1"/>
    <property type="match status" value="1"/>
</dbReference>
<dbReference type="PANTHER" id="PTHR10755">
    <property type="entry name" value="COPROPORPHYRINOGEN III OXIDASE, MITOCHONDRIAL"/>
    <property type="match status" value="1"/>
</dbReference>
<dbReference type="PANTHER" id="PTHR10755:SF0">
    <property type="entry name" value="OXYGEN-DEPENDENT COPROPORPHYRINOGEN-III OXIDASE, MITOCHONDRIAL"/>
    <property type="match status" value="1"/>
</dbReference>
<dbReference type="Pfam" id="PF01218">
    <property type="entry name" value="Coprogen_oxidas"/>
    <property type="match status" value="1"/>
</dbReference>
<dbReference type="PIRSF" id="PIRSF000166">
    <property type="entry name" value="Coproporphyri_ox"/>
    <property type="match status" value="1"/>
</dbReference>
<dbReference type="PRINTS" id="PR00073">
    <property type="entry name" value="COPRGNOXDASE"/>
</dbReference>
<dbReference type="SUPFAM" id="SSF102886">
    <property type="entry name" value="Coproporphyrinogen III oxidase"/>
    <property type="match status" value="1"/>
</dbReference>
<dbReference type="PROSITE" id="PS01021">
    <property type="entry name" value="COPROGEN_OXIDASE"/>
    <property type="match status" value="1"/>
</dbReference>
<organism>
    <name type="scientific">Prochlorococcus marinus (strain MIT 9515)</name>
    <dbReference type="NCBI Taxonomy" id="167542"/>
    <lineage>
        <taxon>Bacteria</taxon>
        <taxon>Bacillati</taxon>
        <taxon>Cyanobacteriota</taxon>
        <taxon>Cyanophyceae</taxon>
        <taxon>Synechococcales</taxon>
        <taxon>Prochlorococcaceae</taxon>
        <taxon>Prochlorococcus</taxon>
    </lineage>
</organism>
<proteinExistence type="inferred from homology"/>
<evidence type="ECO:0000255" key="1">
    <source>
        <dbReference type="HAMAP-Rule" id="MF_00333"/>
    </source>
</evidence>
<name>HEM6_PROM5</name>
<accession>A2BYW5</accession>
<keyword id="KW-0149">Chlorophyll biosynthesis</keyword>
<keyword id="KW-0963">Cytoplasm</keyword>
<keyword id="KW-0350">Heme biosynthesis</keyword>
<keyword id="KW-0479">Metal-binding</keyword>
<keyword id="KW-0560">Oxidoreductase</keyword>
<keyword id="KW-0627">Porphyrin biosynthesis</keyword>
<gene>
    <name evidence="1" type="primary">hemF</name>
    <name type="ordered locus">P9515_17691</name>
</gene>
<protein>
    <recommendedName>
        <fullName evidence="1">Oxygen-dependent coproporphyrinogen-III oxidase</fullName>
        <shortName evidence="1">CPO</shortName>
        <shortName evidence="1">Coprogen oxidase</shortName>
        <shortName evidence="1">Coproporphyrinogenase</shortName>
        <ecNumber evidence="1">1.3.3.3</ecNumber>
    </recommendedName>
</protein>
<reference key="1">
    <citation type="journal article" date="2007" name="PLoS Genet.">
        <title>Patterns and implications of gene gain and loss in the evolution of Prochlorococcus.</title>
        <authorList>
            <person name="Kettler G.C."/>
            <person name="Martiny A.C."/>
            <person name="Huang K."/>
            <person name="Zucker J."/>
            <person name="Coleman M.L."/>
            <person name="Rodrigue S."/>
            <person name="Chen F."/>
            <person name="Lapidus A."/>
            <person name="Ferriera S."/>
            <person name="Johnson J."/>
            <person name="Steglich C."/>
            <person name="Church G.M."/>
            <person name="Richardson P."/>
            <person name="Chisholm S.W."/>
        </authorList>
    </citation>
    <scope>NUCLEOTIDE SEQUENCE [LARGE SCALE GENOMIC DNA]</scope>
    <source>
        <strain>MIT 9515</strain>
    </source>
</reference>
<comment type="function">
    <text evidence="1">Involved in the heme and chlorophyll biosynthesis. Catalyzes the aerobic oxidative decarboxylation of propionate groups of rings A and B of coproporphyrinogen-III to yield the vinyl groups in protoporphyrinogen-IX.</text>
</comment>
<comment type="catalytic activity">
    <reaction evidence="1">
        <text>coproporphyrinogen III + O2 + 2 H(+) = protoporphyrinogen IX + 2 CO2 + 2 H2O</text>
        <dbReference type="Rhea" id="RHEA:18257"/>
        <dbReference type="ChEBI" id="CHEBI:15377"/>
        <dbReference type="ChEBI" id="CHEBI:15378"/>
        <dbReference type="ChEBI" id="CHEBI:15379"/>
        <dbReference type="ChEBI" id="CHEBI:16526"/>
        <dbReference type="ChEBI" id="CHEBI:57307"/>
        <dbReference type="ChEBI" id="CHEBI:57309"/>
        <dbReference type="EC" id="1.3.3.3"/>
    </reaction>
</comment>
<comment type="cofactor">
    <cofactor evidence="1">
        <name>a divalent metal cation</name>
        <dbReference type="ChEBI" id="CHEBI:60240"/>
    </cofactor>
</comment>
<comment type="pathway">
    <text evidence="1">Porphyrin-containing compound metabolism; protoporphyrin-IX biosynthesis; protoporphyrinogen-IX from coproporphyrinogen-III (O2 route): step 1/1.</text>
</comment>
<comment type="subunit">
    <text evidence="1">Homodimer.</text>
</comment>
<comment type="subcellular location">
    <subcellularLocation>
        <location evidence="1">Cytoplasm</location>
    </subcellularLocation>
</comment>
<comment type="similarity">
    <text evidence="1">Belongs to the aerobic coproporphyrinogen-III oxidase family.</text>
</comment>
<sequence length="342" mass="39764">MSKEPPNNSREKTKNLLLKLQDNICKNLENIDGKAKFTEESWLREEGGGGRSRVLKNGSIFEQAGVNFSEVYGKELPQSIISQRPEAKGHEWFATGTSMVLHPKNPFIPTVHLNYRYFEAGPVWWFGGGADLTPYYPYLSDVRHFHKEHSNACEKVNKKLHLVFKPWCDEYFFLKHRNESRGIGGIFYDYQDGSGNIYKGSNKDGNAYKESNNIGELNLNWNNLFALAENCGEAFLSSYQPIIEKRVSQNYTKEEREFQLYRRGRYVEFNLVWDRGTIFGLQTNGRTESILMSLPPLARWEYGYKAKQGSREDLLTKIFTRPQDWQNDKVLEEFCLENNIFD</sequence>
<feature type="chain" id="PRO_1000019478" description="Oxygen-dependent coproporphyrinogen-III oxidase">
    <location>
        <begin position="1"/>
        <end position="342"/>
    </location>
</feature>
<feature type="region of interest" description="Important for dimerization" evidence="1">
    <location>
        <begin position="266"/>
        <end position="301"/>
    </location>
</feature>
<feature type="active site" description="Proton donor" evidence="1">
    <location>
        <position position="112"/>
    </location>
</feature>
<feature type="binding site" evidence="1">
    <location>
        <position position="98"/>
    </location>
    <ligand>
        <name>substrate</name>
    </ligand>
</feature>
<feature type="binding site" evidence="1">
    <location>
        <position position="102"/>
    </location>
    <ligand>
        <name>a divalent metal cation</name>
        <dbReference type="ChEBI" id="CHEBI:60240"/>
    </ligand>
</feature>
<feature type="binding site" evidence="1">
    <location>
        <position position="112"/>
    </location>
    <ligand>
        <name>a divalent metal cation</name>
        <dbReference type="ChEBI" id="CHEBI:60240"/>
    </ligand>
</feature>
<feature type="binding site" evidence="1">
    <location>
        <begin position="114"/>
        <end position="116"/>
    </location>
    <ligand>
        <name>substrate</name>
    </ligand>
</feature>
<feature type="binding site" evidence="1">
    <location>
        <position position="146"/>
    </location>
    <ligand>
        <name>a divalent metal cation</name>
        <dbReference type="ChEBI" id="CHEBI:60240"/>
    </ligand>
</feature>
<feature type="binding site" evidence="1">
    <location>
        <position position="176"/>
    </location>
    <ligand>
        <name>a divalent metal cation</name>
        <dbReference type="ChEBI" id="CHEBI:60240"/>
    </ligand>
</feature>
<feature type="site" description="Important for dimerization" evidence="1">
    <location>
        <position position="176"/>
    </location>
</feature>